<gene>
    <name type="primary">ribU</name>
    <name type="ordered locus">llmg_1195</name>
</gene>
<protein>
    <recommendedName>
        <fullName>Riboflavin transporter RibU</fullName>
    </recommendedName>
    <alternativeName>
        <fullName>Riboflavin ECF transporter S component RibU</fullName>
    </alternativeName>
</protein>
<organism>
    <name type="scientific">Lactococcus lactis subsp. cremoris (strain MG1363)</name>
    <dbReference type="NCBI Taxonomy" id="416870"/>
    <lineage>
        <taxon>Bacteria</taxon>
        <taxon>Bacillati</taxon>
        <taxon>Bacillota</taxon>
        <taxon>Bacilli</taxon>
        <taxon>Lactobacillales</taxon>
        <taxon>Streptococcaceae</taxon>
        <taxon>Lactococcus</taxon>
        <taxon>Lactococcus cremoris subsp. cremoris</taxon>
    </lineage>
</organism>
<feature type="chain" id="PRO_0000397873" description="Riboflavin transporter RibU">
    <location>
        <begin position="1"/>
        <end position="206"/>
    </location>
</feature>
<feature type="transmembrane region" description="Helical" evidence="2">
    <location>
        <begin position="7"/>
        <end position="27"/>
    </location>
</feature>
<feature type="transmembrane region" description="Helical" evidence="2">
    <location>
        <begin position="42"/>
        <end position="62"/>
    </location>
</feature>
<feature type="transmembrane region" description="Helical" evidence="2">
    <location>
        <begin position="79"/>
        <end position="99"/>
    </location>
</feature>
<feature type="transmembrane region" description="Helical" evidence="2">
    <location>
        <begin position="113"/>
        <end position="133"/>
    </location>
</feature>
<feature type="transmembrane region" description="Helical" evidence="2">
    <location>
        <begin position="147"/>
        <end position="169"/>
    </location>
</feature>
<feature type="transmembrane region" description="Helical" evidence="2">
    <location>
        <begin position="173"/>
        <end position="195"/>
    </location>
</feature>
<keyword id="KW-1003">Cell membrane</keyword>
<keyword id="KW-0472">Membrane</keyword>
<keyword id="KW-0812">Transmembrane</keyword>
<keyword id="KW-1133">Transmembrane helix</keyword>
<keyword id="KW-0813">Transport</keyword>
<comment type="function">
    <text evidence="1 3">Mediates riboflavin uptake, may also transport FMN and roseoflavin (By similarity). Probably a riboflavin-binding protein that interacts with the energy-coupling factor (ECF) ABC-transporter complex. Unlike classic ABC transporters this ECF transporter provides the energy necessary to transport a number of different substrates. The substrates themselves are bound by transmembrane, not extracytoplasmic soluble proteins. Uptake of riboflavin into proteosomes containing EcfA1A2T and RibU has been demonstrated. Uptake requires hydrolyzable Mg-ATP.</text>
</comment>
<comment type="subunit">
    <text evidence="3">In E.coli forms a stable energy-coupling factor (ECF) transporter complex composed of 2 membrane-embedded substrate-binding protein (S component), 2 ATP-binding proteins (A and A' components) and 2 transmembrane proteins (T component), probably with a stoichiometry of 2:1:1:2. May be able to interact with more than 1 S component at a time.</text>
</comment>
<comment type="subcellular location">
    <subcellularLocation>
        <location evidence="5">Cell membrane</location>
        <topology evidence="5">Multi-pass membrane protein</topology>
    </subcellularLocation>
</comment>
<comment type="domain">
    <text evidence="1">Riboflavin is stacked with one or more Trp residues in the binding pocket of RibU.</text>
</comment>
<comment type="similarity">
    <text evidence="4">Belongs to the prokaryotic riboflavin transporter (P-RFT) (TC 2.A.87) family.</text>
</comment>
<accession>P0CI36</accession>
<accession>A2RKH8</accession>
<accession>Q1RN04</accession>
<reference key="1">
    <citation type="journal article" date="2007" name="J. Bacteriol.">
        <title>The complete genome sequence of the lactic acid bacterial paradigm Lactococcus lactis subsp. cremoris MG1363.</title>
        <authorList>
            <person name="Wegmann U."/>
            <person name="O'Connell-Motherway M."/>
            <person name="Zomer A."/>
            <person name="Buist G."/>
            <person name="Shearman C."/>
            <person name="Canchaya C."/>
            <person name="Ventura M."/>
            <person name="Goesmann A."/>
            <person name="Gasson M.J."/>
            <person name="Kuipers O.P."/>
            <person name="van Sinderen D."/>
            <person name="Kok J."/>
        </authorList>
    </citation>
    <scope>NUCLEOTIDE SEQUENCE [LARGE SCALE GENOMIC DNA]</scope>
    <source>
        <strain>MG1363</strain>
    </source>
</reference>
<reference key="2">
    <citation type="journal article" date="2011" name="J. Biol. Chem.">
        <title>Quaternary structure and functional unit of energy coupling factor (ECF)-type transporters.</title>
        <authorList>
            <person name="ter Beek J."/>
            <person name="Duurkens R.H."/>
            <person name="Erkens G.B."/>
            <person name="Slotboom D.J."/>
        </authorList>
    </citation>
    <scope>SUBUNIT</scope>
    <scope>SUBCELLULAR LOCATION</scope>
    <scope>EXPRESSION IN E.COLI</scope>
    <scope>FUNCTION</scope>
    <source>
        <strain>MG1363</strain>
    </source>
</reference>
<sequence length="206" mass="22972">MSKTRRMVLIAMLAALSTILLLPILQFPLLPGIDFMKVELSIIPVLIGVFTLGLGDGFIILFIRSVLWYLLFNQGPSTWIGVPMNFVALGIFMAIVWFFTKKKFSIKNYTVGIVLATIASVLVMMVLNVFYALPLYRLAAGFDVDKIFAGATHLFNMGSLSVTLNPTYLLTVVLPFNALQYIIFALVFGLIVTVFKKNKVVKFYNA</sequence>
<proteinExistence type="evidence at protein level"/>
<name>RIBU_LACLM</name>
<dbReference type="EMBL" id="AM406671">
    <property type="protein sequence ID" value="CAL97788.1"/>
    <property type="molecule type" value="Genomic_DNA"/>
</dbReference>
<dbReference type="RefSeq" id="WP_011835093.1">
    <property type="nucleotide sequence ID" value="NC_009004.1"/>
</dbReference>
<dbReference type="SMR" id="P0CI36"/>
<dbReference type="STRING" id="416870.llmg_1195"/>
<dbReference type="GeneID" id="61109529"/>
<dbReference type="KEGG" id="llm:llmg_1195"/>
<dbReference type="eggNOG" id="COG3601">
    <property type="taxonomic scope" value="Bacteria"/>
</dbReference>
<dbReference type="HOGENOM" id="CLU_086673_2_1_9"/>
<dbReference type="OrthoDB" id="9809216at2"/>
<dbReference type="PhylomeDB" id="P0CI36"/>
<dbReference type="Proteomes" id="UP000000364">
    <property type="component" value="Chromosome"/>
</dbReference>
<dbReference type="GO" id="GO:0005886">
    <property type="term" value="C:plasma membrane"/>
    <property type="evidence" value="ECO:0000314"/>
    <property type="project" value="UniProtKB"/>
</dbReference>
<dbReference type="GO" id="GO:0042626">
    <property type="term" value="F:ATPase-coupled transmembrane transporter activity"/>
    <property type="evidence" value="ECO:0000314"/>
    <property type="project" value="GO_Central"/>
</dbReference>
<dbReference type="GO" id="GO:0032217">
    <property type="term" value="F:riboflavin transmembrane transporter activity"/>
    <property type="evidence" value="ECO:0007669"/>
    <property type="project" value="InterPro"/>
</dbReference>
<dbReference type="FunFam" id="1.10.1760.20:FF:000009">
    <property type="entry name" value="Riboflavin transporter"/>
    <property type="match status" value="1"/>
</dbReference>
<dbReference type="Gene3D" id="1.10.1760.20">
    <property type="match status" value="1"/>
</dbReference>
<dbReference type="InterPro" id="IPR024529">
    <property type="entry name" value="ECF_trnsprt_substrate-spec"/>
</dbReference>
<dbReference type="InterPro" id="IPR025720">
    <property type="entry name" value="RibU"/>
</dbReference>
<dbReference type="PANTHER" id="PTHR38438">
    <property type="entry name" value="RIBOFLAVIN TRANSPORTER RIBU"/>
    <property type="match status" value="1"/>
</dbReference>
<dbReference type="PANTHER" id="PTHR38438:SF1">
    <property type="entry name" value="RIBOFLAVIN TRANSPORTER RIBU"/>
    <property type="match status" value="1"/>
</dbReference>
<dbReference type="Pfam" id="PF12822">
    <property type="entry name" value="ECF_trnsprt"/>
    <property type="match status" value="1"/>
</dbReference>
<dbReference type="PIRSF" id="PIRSF037778">
    <property type="entry name" value="UCP037778_transp_RibU"/>
    <property type="match status" value="1"/>
</dbReference>
<evidence type="ECO:0000250" key="1"/>
<evidence type="ECO:0000255" key="2"/>
<evidence type="ECO:0000269" key="3">
    <source>
    </source>
</evidence>
<evidence type="ECO:0000305" key="4"/>
<evidence type="ECO:0000305" key="5">
    <source>
    </source>
</evidence>